<dbReference type="EC" id="2.7.4.6" evidence="1 2"/>
<dbReference type="EMBL" id="AF069544">
    <property type="protein sequence ID" value="AAC23864.1"/>
    <property type="molecule type" value="Genomic_DNA"/>
</dbReference>
<dbReference type="EMBL" id="CP000480">
    <property type="protein sequence ID" value="ABK70634.1"/>
    <property type="molecule type" value="Genomic_DNA"/>
</dbReference>
<dbReference type="EMBL" id="CP001663">
    <property type="protein sequence ID" value="AFP40964.1"/>
    <property type="molecule type" value="Genomic_DNA"/>
</dbReference>
<dbReference type="RefSeq" id="WP_011729972.1">
    <property type="nucleotide sequence ID" value="NZ_SIJM01000004.1"/>
</dbReference>
<dbReference type="RefSeq" id="YP_888891.1">
    <property type="nucleotide sequence ID" value="NC_008596.1"/>
</dbReference>
<dbReference type="SMR" id="O85501"/>
<dbReference type="STRING" id="246196.MSMEG_4627"/>
<dbReference type="PaxDb" id="246196-MSMEI_4510"/>
<dbReference type="GeneID" id="93459316"/>
<dbReference type="KEGG" id="msb:LJ00_22885"/>
<dbReference type="KEGG" id="msg:MSMEI_4510"/>
<dbReference type="KEGG" id="msm:MSMEG_4627"/>
<dbReference type="PATRIC" id="fig|246196.19.peg.4522"/>
<dbReference type="eggNOG" id="COG0105">
    <property type="taxonomic scope" value="Bacteria"/>
</dbReference>
<dbReference type="OrthoDB" id="9801161at2"/>
<dbReference type="Proteomes" id="UP000000757">
    <property type="component" value="Chromosome"/>
</dbReference>
<dbReference type="Proteomes" id="UP000006158">
    <property type="component" value="Chromosome"/>
</dbReference>
<dbReference type="GO" id="GO:0005737">
    <property type="term" value="C:cytoplasm"/>
    <property type="evidence" value="ECO:0007669"/>
    <property type="project" value="UniProtKB-SubCell"/>
</dbReference>
<dbReference type="GO" id="GO:0005524">
    <property type="term" value="F:ATP binding"/>
    <property type="evidence" value="ECO:0007669"/>
    <property type="project" value="UniProtKB-UniRule"/>
</dbReference>
<dbReference type="GO" id="GO:0046872">
    <property type="term" value="F:metal ion binding"/>
    <property type="evidence" value="ECO:0007669"/>
    <property type="project" value="UniProtKB-KW"/>
</dbReference>
<dbReference type="GO" id="GO:0004550">
    <property type="term" value="F:nucleoside diphosphate kinase activity"/>
    <property type="evidence" value="ECO:0007669"/>
    <property type="project" value="UniProtKB-UniRule"/>
</dbReference>
<dbReference type="GO" id="GO:0006241">
    <property type="term" value="P:CTP biosynthetic process"/>
    <property type="evidence" value="ECO:0007669"/>
    <property type="project" value="UniProtKB-UniRule"/>
</dbReference>
<dbReference type="GO" id="GO:0006183">
    <property type="term" value="P:GTP biosynthetic process"/>
    <property type="evidence" value="ECO:0007669"/>
    <property type="project" value="UniProtKB-UniRule"/>
</dbReference>
<dbReference type="GO" id="GO:0006228">
    <property type="term" value="P:UTP biosynthetic process"/>
    <property type="evidence" value="ECO:0007669"/>
    <property type="project" value="UniProtKB-UniRule"/>
</dbReference>
<dbReference type="CDD" id="cd04413">
    <property type="entry name" value="NDPk_I"/>
    <property type="match status" value="1"/>
</dbReference>
<dbReference type="FunFam" id="3.30.70.141:FF:000003">
    <property type="entry name" value="Nucleoside diphosphate kinase"/>
    <property type="match status" value="1"/>
</dbReference>
<dbReference type="Gene3D" id="3.30.70.141">
    <property type="entry name" value="Nucleoside diphosphate kinase-like domain"/>
    <property type="match status" value="1"/>
</dbReference>
<dbReference type="HAMAP" id="MF_00451">
    <property type="entry name" value="NDP_kinase"/>
    <property type="match status" value="1"/>
</dbReference>
<dbReference type="InterPro" id="IPR034907">
    <property type="entry name" value="NDK-like_dom"/>
</dbReference>
<dbReference type="InterPro" id="IPR036850">
    <property type="entry name" value="NDK-like_dom_sf"/>
</dbReference>
<dbReference type="InterPro" id="IPR001564">
    <property type="entry name" value="Nucleoside_diP_kinase"/>
</dbReference>
<dbReference type="InterPro" id="IPR023005">
    <property type="entry name" value="Nucleoside_diP_kinase_AS"/>
</dbReference>
<dbReference type="NCBIfam" id="NF001908">
    <property type="entry name" value="PRK00668.1"/>
    <property type="match status" value="1"/>
</dbReference>
<dbReference type="PANTHER" id="PTHR11349">
    <property type="entry name" value="NUCLEOSIDE DIPHOSPHATE KINASE"/>
    <property type="match status" value="1"/>
</dbReference>
<dbReference type="Pfam" id="PF00334">
    <property type="entry name" value="NDK"/>
    <property type="match status" value="1"/>
</dbReference>
<dbReference type="PRINTS" id="PR01243">
    <property type="entry name" value="NUCDPKINASE"/>
</dbReference>
<dbReference type="SMART" id="SM00562">
    <property type="entry name" value="NDK"/>
    <property type="match status" value="1"/>
</dbReference>
<dbReference type="SUPFAM" id="SSF54919">
    <property type="entry name" value="Nucleoside diphosphate kinase, NDK"/>
    <property type="match status" value="1"/>
</dbReference>
<dbReference type="PROSITE" id="PS00469">
    <property type="entry name" value="NDPK"/>
    <property type="match status" value="1"/>
</dbReference>
<dbReference type="PROSITE" id="PS51374">
    <property type="entry name" value="NDPK_LIKE"/>
    <property type="match status" value="1"/>
</dbReference>
<keyword id="KW-0067">ATP-binding</keyword>
<keyword id="KW-0963">Cytoplasm</keyword>
<keyword id="KW-0418">Kinase</keyword>
<keyword id="KW-0460">Magnesium</keyword>
<keyword id="KW-0479">Metal-binding</keyword>
<keyword id="KW-0546">Nucleotide metabolism</keyword>
<keyword id="KW-0547">Nucleotide-binding</keyword>
<keyword id="KW-0597">Phosphoprotein</keyword>
<keyword id="KW-1185">Reference proteome</keyword>
<keyword id="KW-0808">Transferase</keyword>
<accession>O85501</accession>
<accession>A0R153</accession>
<accession>I7GDU8</accession>
<evidence type="ECO:0000255" key="1">
    <source>
        <dbReference type="HAMAP-Rule" id="MF_00451"/>
    </source>
</evidence>
<evidence type="ECO:0000269" key="2">
    <source>
    </source>
</evidence>
<evidence type="ECO:0000303" key="3">
    <source>
    </source>
</evidence>
<evidence type="ECO:0000305" key="4">
    <source>
    </source>
</evidence>
<protein>
    <recommendedName>
        <fullName evidence="1 3">Nucleoside diphosphate kinase</fullName>
        <shortName evidence="1 3">NDK</shortName>
        <shortName evidence="1">NDP kinase</shortName>
        <ecNumber evidence="1 2">2.7.4.6</ecNumber>
    </recommendedName>
    <alternativeName>
        <fullName evidence="1">Nucleoside-2-P kinase</fullName>
    </alternativeName>
</protein>
<proteinExistence type="evidence at protein level"/>
<organism>
    <name type="scientific">Mycolicibacterium smegmatis (strain ATCC 700084 / mc(2)155)</name>
    <name type="common">Mycobacterium smegmatis</name>
    <dbReference type="NCBI Taxonomy" id="246196"/>
    <lineage>
        <taxon>Bacteria</taxon>
        <taxon>Bacillati</taxon>
        <taxon>Actinomycetota</taxon>
        <taxon>Actinomycetes</taxon>
        <taxon>Mycobacteriales</taxon>
        <taxon>Mycobacteriaceae</taxon>
        <taxon>Mycolicibacterium</taxon>
    </lineage>
</organism>
<feature type="chain" id="PRO_0000137009" description="Nucleoside diphosphate kinase">
    <location>
        <begin position="1"/>
        <end position="139"/>
    </location>
</feature>
<feature type="active site" description="Pros-phosphohistidine intermediate" evidence="1 4">
    <location>
        <position position="117"/>
    </location>
</feature>
<feature type="binding site" evidence="1">
    <location>
        <position position="10"/>
    </location>
    <ligand>
        <name>ATP</name>
        <dbReference type="ChEBI" id="CHEBI:30616"/>
    </ligand>
</feature>
<feature type="binding site" evidence="1">
    <location>
        <position position="58"/>
    </location>
    <ligand>
        <name>ATP</name>
        <dbReference type="ChEBI" id="CHEBI:30616"/>
    </ligand>
</feature>
<feature type="binding site" evidence="1">
    <location>
        <position position="86"/>
    </location>
    <ligand>
        <name>ATP</name>
        <dbReference type="ChEBI" id="CHEBI:30616"/>
    </ligand>
</feature>
<feature type="binding site" evidence="1">
    <location>
        <position position="92"/>
    </location>
    <ligand>
        <name>ATP</name>
        <dbReference type="ChEBI" id="CHEBI:30616"/>
    </ligand>
</feature>
<feature type="binding site" evidence="1">
    <location>
        <position position="104"/>
    </location>
    <ligand>
        <name>ATP</name>
        <dbReference type="ChEBI" id="CHEBI:30616"/>
    </ligand>
</feature>
<feature type="binding site" evidence="1">
    <location>
        <position position="114"/>
    </location>
    <ligand>
        <name>ATP</name>
        <dbReference type="ChEBI" id="CHEBI:30616"/>
    </ligand>
</feature>
<feature type="mutagenesis site" description="Almost loss of activity. 5-fold decrease in autophosphorylation." evidence="2">
    <original>H</original>
    <variation>Q</variation>
    <location>
        <position position="117"/>
    </location>
</feature>
<sequence>MTERTLVLIKPDGVKRQLVGEILSRIERKGLTLAALELKNVSDDLARQHYAEHADKPFFGSLLEFITSGPLVAAIVEGPRAVAAFRQIAGGTDPVEKAVPGTIRGDFALITQDNLVHGSDSPESAAREIALWFPGEATA</sequence>
<name>NDK_MYCS2</name>
<gene>
    <name evidence="1" type="primary">ndk</name>
    <name type="ordered locus">MSMEG_4627</name>
    <name type="ordered locus">MSMEI_4510</name>
</gene>
<comment type="function">
    <text evidence="1 2">Major role in the synthesis of nucleoside triphosphates other than ATP. The ATP gamma phosphate is transferred to the NDP beta phosphate via a ping-pong mechanism, using a phosphorylated active-site intermediate.</text>
</comment>
<comment type="catalytic activity">
    <reaction evidence="1 2">
        <text>a 2'-deoxyribonucleoside 5'-diphosphate + ATP = a 2'-deoxyribonucleoside 5'-triphosphate + ADP</text>
        <dbReference type="Rhea" id="RHEA:44640"/>
        <dbReference type="ChEBI" id="CHEBI:30616"/>
        <dbReference type="ChEBI" id="CHEBI:61560"/>
        <dbReference type="ChEBI" id="CHEBI:73316"/>
        <dbReference type="ChEBI" id="CHEBI:456216"/>
        <dbReference type="EC" id="2.7.4.6"/>
    </reaction>
</comment>
<comment type="catalytic activity">
    <reaction evidence="1 2">
        <text>a ribonucleoside 5'-diphosphate + ATP = a ribonucleoside 5'-triphosphate + ADP</text>
        <dbReference type="Rhea" id="RHEA:18113"/>
        <dbReference type="ChEBI" id="CHEBI:30616"/>
        <dbReference type="ChEBI" id="CHEBI:57930"/>
        <dbReference type="ChEBI" id="CHEBI:61557"/>
        <dbReference type="ChEBI" id="CHEBI:456216"/>
        <dbReference type="EC" id="2.7.4.6"/>
    </reaction>
</comment>
<comment type="cofactor">
    <cofactor evidence="1">
        <name>Mg(2+)</name>
        <dbReference type="ChEBI" id="CHEBI:18420"/>
    </cofactor>
</comment>
<comment type="subunit">
    <text evidence="1">Homotetramer.</text>
</comment>
<comment type="subcellular location">
    <subcellularLocation>
        <location evidence="1">Cytoplasm</location>
    </subcellularLocation>
</comment>
<comment type="similarity">
    <text evidence="1">Belongs to the NDK family.</text>
</comment>
<reference key="1">
    <citation type="submission" date="1998-06" db="EMBL/GenBank/DDBJ databases">
        <title>Mycobacterium smegmatis nucleoside diphosphate kinase (ndk) gene.</title>
        <authorList>
            <person name="Korman T.M."/>
            <person name="Billman-Jacobe H."/>
            <person name="Coppel R.L."/>
        </authorList>
    </citation>
    <scope>NUCLEOTIDE SEQUENCE [GENOMIC DNA]</scope>
</reference>
<reference key="2">
    <citation type="submission" date="2006-10" db="EMBL/GenBank/DDBJ databases">
        <authorList>
            <person name="Fleischmann R.D."/>
            <person name="Dodson R.J."/>
            <person name="Haft D.H."/>
            <person name="Merkel J.S."/>
            <person name="Nelson W.C."/>
            <person name="Fraser C.M."/>
        </authorList>
    </citation>
    <scope>NUCLEOTIDE SEQUENCE [LARGE SCALE GENOMIC DNA]</scope>
    <source>
        <strain>ATCC 700084 / mc(2)155</strain>
    </source>
</reference>
<reference key="3">
    <citation type="journal article" date="2007" name="Genome Biol.">
        <title>Interrupted coding sequences in Mycobacterium smegmatis: authentic mutations or sequencing errors?</title>
        <authorList>
            <person name="Deshayes C."/>
            <person name="Perrodou E."/>
            <person name="Gallien S."/>
            <person name="Euphrasie D."/>
            <person name="Schaeffer C."/>
            <person name="Van-Dorsselaer A."/>
            <person name="Poch O."/>
            <person name="Lecompte O."/>
            <person name="Reyrat J.-M."/>
        </authorList>
    </citation>
    <scope>NUCLEOTIDE SEQUENCE [LARGE SCALE GENOMIC DNA]</scope>
    <source>
        <strain>ATCC 700084 / mc(2)155</strain>
    </source>
</reference>
<reference key="4">
    <citation type="journal article" date="2009" name="Genome Res.">
        <title>Ortho-proteogenomics: multiple proteomes investigation through orthology and a new MS-based protocol.</title>
        <authorList>
            <person name="Gallien S."/>
            <person name="Perrodou E."/>
            <person name="Carapito C."/>
            <person name="Deshayes C."/>
            <person name="Reyrat J.-M."/>
            <person name="Van Dorsselaer A."/>
            <person name="Poch O."/>
            <person name="Schaeffer C."/>
            <person name="Lecompte O."/>
        </authorList>
    </citation>
    <scope>NUCLEOTIDE SEQUENCE [LARGE SCALE GENOMIC DNA]</scope>
    <source>
        <strain>ATCC 700084 / mc(2)155</strain>
    </source>
</reference>
<reference key="5">
    <citation type="journal article" date="2012" name="Open Biochem. J.">
        <title>Histidine 117 in the His-Gly-Ser-Asp motif is required for the biochemical activities of nucleoside diphosphate kinase of Mycobacterium smegmatis.</title>
        <authorList>
            <person name="Arumugam M."/>
            <person name="Ajitkumar P."/>
        </authorList>
    </citation>
    <scope>FUNCTION</scope>
    <scope>CATALYTIC ACTIVITY</scope>
    <scope>MUTAGENESIS OF HIS-117</scope>
    <scope>ACTIVE SITE</scope>
</reference>